<reference key="1">
    <citation type="journal article" date="1999" name="DNA Res.">
        <title>Complete genome sequence of an aerobic hyper-thermophilic crenarchaeon, Aeropyrum pernix K1.</title>
        <authorList>
            <person name="Kawarabayasi Y."/>
            <person name="Hino Y."/>
            <person name="Horikawa H."/>
            <person name="Yamazaki S."/>
            <person name="Haikawa Y."/>
            <person name="Jin-no K."/>
            <person name="Takahashi M."/>
            <person name="Sekine M."/>
            <person name="Baba S."/>
            <person name="Ankai A."/>
            <person name="Kosugi H."/>
            <person name="Hosoyama A."/>
            <person name="Fukui S."/>
            <person name="Nagai Y."/>
            <person name="Nishijima K."/>
            <person name="Nakazawa H."/>
            <person name="Takamiya M."/>
            <person name="Masuda S."/>
            <person name="Funahashi T."/>
            <person name="Tanaka T."/>
            <person name="Kudoh Y."/>
            <person name="Yamazaki J."/>
            <person name="Kushida N."/>
            <person name="Oguchi A."/>
            <person name="Aoki K."/>
            <person name="Kubota K."/>
            <person name="Nakamura Y."/>
            <person name="Nomura N."/>
            <person name="Sako Y."/>
            <person name="Kikuchi H."/>
        </authorList>
    </citation>
    <scope>NUCLEOTIDE SEQUENCE [LARGE SCALE GENOMIC DNA]</scope>
    <source>
        <strain>ATCC 700893 / DSM 11879 / JCM 9820 / NBRC 100138 / K1</strain>
    </source>
</reference>
<keyword id="KW-0378">Hydrolase</keyword>
<keyword id="KW-0546">Nucleotide metabolism</keyword>
<keyword id="KW-0547">Nucleotide-binding</keyword>
<keyword id="KW-1185">Reference proteome</keyword>
<name>DCD_AERPE</name>
<proteinExistence type="inferred from homology"/>
<accession>Q9YFA8</accession>
<comment type="function">
    <text evidence="1">Catalyzes the deamination of dCTP to dUTP.</text>
</comment>
<comment type="catalytic activity">
    <reaction evidence="1">
        <text>dCTP + H2O + H(+) = dUTP + NH4(+)</text>
        <dbReference type="Rhea" id="RHEA:22680"/>
        <dbReference type="ChEBI" id="CHEBI:15377"/>
        <dbReference type="ChEBI" id="CHEBI:15378"/>
        <dbReference type="ChEBI" id="CHEBI:28938"/>
        <dbReference type="ChEBI" id="CHEBI:61481"/>
        <dbReference type="ChEBI" id="CHEBI:61555"/>
        <dbReference type="EC" id="3.5.4.13"/>
    </reaction>
</comment>
<comment type="pathway">
    <text evidence="1">Pyrimidine metabolism; dUMP biosynthesis; dUMP from dCTP (dUTP route): step 1/2.</text>
</comment>
<comment type="subunit">
    <text evidence="1">Homotrimer.</text>
</comment>
<comment type="similarity">
    <text evidence="1">Belongs to the dCTP deaminase family.</text>
</comment>
<protein>
    <recommendedName>
        <fullName evidence="1">dCTP deaminase</fullName>
        <ecNumber evidence="1">3.5.4.13</ecNumber>
    </recommendedName>
    <alternativeName>
        <fullName evidence="1">Deoxycytidine triphosphate deaminase</fullName>
    </alternativeName>
</protein>
<evidence type="ECO:0000255" key="1">
    <source>
        <dbReference type="HAMAP-Rule" id="MF_00146"/>
    </source>
</evidence>
<feature type="chain" id="PRO_0000156026" description="dCTP deaminase">
    <location>
        <begin position="1"/>
        <end position="178"/>
    </location>
</feature>
<feature type="active site" description="Proton donor/acceptor" evidence="1">
    <location>
        <position position="125"/>
    </location>
</feature>
<feature type="binding site" evidence="1">
    <location>
        <begin position="99"/>
        <end position="104"/>
    </location>
    <ligand>
        <name>dCTP</name>
        <dbReference type="ChEBI" id="CHEBI:61481"/>
    </ligand>
</feature>
<feature type="binding site" evidence="1">
    <location>
        <position position="115"/>
    </location>
    <ligand>
        <name>dCTP</name>
        <dbReference type="ChEBI" id="CHEBI:61481"/>
    </ligand>
</feature>
<feature type="binding site" evidence="1">
    <location>
        <position position="157"/>
    </location>
    <ligand>
        <name>dCTP</name>
        <dbReference type="ChEBI" id="CHEBI:61481"/>
    </ligand>
</feature>
<feature type="binding site" evidence="1">
    <location>
        <position position="164"/>
    </location>
    <ligand>
        <name>dCTP</name>
        <dbReference type="ChEBI" id="CHEBI:61481"/>
    </ligand>
</feature>
<dbReference type="EC" id="3.5.4.13" evidence="1"/>
<dbReference type="EMBL" id="BA000002">
    <property type="protein sequence ID" value="BAA79288.2"/>
    <property type="molecule type" value="Genomic_DNA"/>
</dbReference>
<dbReference type="PIR" id="D72724">
    <property type="entry name" value="D72724"/>
</dbReference>
<dbReference type="RefSeq" id="WP_010865670.1">
    <property type="nucleotide sequence ID" value="NC_000854.2"/>
</dbReference>
<dbReference type="SMR" id="Q9YFA8"/>
<dbReference type="STRING" id="272557.APE_0333.1"/>
<dbReference type="EnsemblBacteria" id="BAA79288">
    <property type="protein sequence ID" value="BAA79288"/>
    <property type="gene ID" value="APE_0333.1"/>
</dbReference>
<dbReference type="GeneID" id="1444552"/>
<dbReference type="KEGG" id="ape:APE_0333.1"/>
<dbReference type="PATRIC" id="fig|272557.25.peg.256"/>
<dbReference type="eggNOG" id="arCOG04048">
    <property type="taxonomic scope" value="Archaea"/>
</dbReference>
<dbReference type="UniPathway" id="UPA00610">
    <property type="reaction ID" value="UER00665"/>
</dbReference>
<dbReference type="Proteomes" id="UP000002518">
    <property type="component" value="Chromosome"/>
</dbReference>
<dbReference type="GO" id="GO:0008829">
    <property type="term" value="F:dCTP deaminase activity"/>
    <property type="evidence" value="ECO:0007669"/>
    <property type="project" value="UniProtKB-UniRule"/>
</dbReference>
<dbReference type="GO" id="GO:0000166">
    <property type="term" value="F:nucleotide binding"/>
    <property type="evidence" value="ECO:0007669"/>
    <property type="project" value="UniProtKB-KW"/>
</dbReference>
<dbReference type="GO" id="GO:0006226">
    <property type="term" value="P:dUMP biosynthetic process"/>
    <property type="evidence" value="ECO:0007669"/>
    <property type="project" value="UniProtKB-UniPathway"/>
</dbReference>
<dbReference type="GO" id="GO:0006229">
    <property type="term" value="P:dUTP biosynthetic process"/>
    <property type="evidence" value="ECO:0007669"/>
    <property type="project" value="UniProtKB-UniRule"/>
</dbReference>
<dbReference type="CDD" id="cd07557">
    <property type="entry name" value="trimeric_dUTPase"/>
    <property type="match status" value="1"/>
</dbReference>
<dbReference type="Gene3D" id="2.70.40.10">
    <property type="match status" value="1"/>
</dbReference>
<dbReference type="HAMAP" id="MF_00146">
    <property type="entry name" value="dCTP_deaminase"/>
    <property type="match status" value="1"/>
</dbReference>
<dbReference type="InterPro" id="IPR011962">
    <property type="entry name" value="dCTP_deaminase"/>
</dbReference>
<dbReference type="InterPro" id="IPR036157">
    <property type="entry name" value="dUTPase-like_sf"/>
</dbReference>
<dbReference type="InterPro" id="IPR033704">
    <property type="entry name" value="dUTPase_trimeric"/>
</dbReference>
<dbReference type="NCBIfam" id="TIGR02274">
    <property type="entry name" value="dCTP_deam"/>
    <property type="match status" value="1"/>
</dbReference>
<dbReference type="PANTHER" id="PTHR42680">
    <property type="entry name" value="DCTP DEAMINASE"/>
    <property type="match status" value="1"/>
</dbReference>
<dbReference type="PANTHER" id="PTHR42680:SF3">
    <property type="entry name" value="DCTP DEAMINASE"/>
    <property type="match status" value="1"/>
</dbReference>
<dbReference type="Pfam" id="PF22769">
    <property type="entry name" value="DCD"/>
    <property type="match status" value="1"/>
</dbReference>
<dbReference type="SUPFAM" id="SSF51283">
    <property type="entry name" value="dUTPase-like"/>
    <property type="match status" value="1"/>
</dbReference>
<gene>
    <name evidence="1" type="primary">dcd</name>
    <name type="ordered locus">APE_0333.1</name>
</gene>
<organism>
    <name type="scientific">Aeropyrum pernix (strain ATCC 700893 / DSM 11879 / JCM 9820 / NBRC 100138 / K1)</name>
    <dbReference type="NCBI Taxonomy" id="272557"/>
    <lineage>
        <taxon>Archaea</taxon>
        <taxon>Thermoproteota</taxon>
        <taxon>Thermoprotei</taxon>
        <taxon>Desulfurococcales</taxon>
        <taxon>Desulfurococcaceae</taxon>
        <taxon>Aeropyrum</taxon>
    </lineage>
</organism>
<sequence length="178" mass="19653">MILSDRDIRALLAIGDLVVEPLSGDTVRENGLDLRLGRGFCRFKRSDRVLDPRAPGSPGEFYECGEGDEIIVGPGEHMLLHTQEYIRLPGYVAGLVNLRSTWARTGIYIPATVVDAGFEGQLTIEVVGSGFPVKLYPGDRFLHLVLVKLQSPAMNPYRGRYQGQRGVRLPKLFAKNTG</sequence>